<protein>
    <recommendedName>
        <fullName>Docking protein 5</fullName>
    </recommendedName>
    <alternativeName>
        <fullName>Downstream of tyrosine kinase 5</fullName>
    </alternativeName>
</protein>
<name>DOK5_MOUSE</name>
<keyword id="KW-1185">Reference proteome</keyword>
<dbReference type="EMBL" id="AF418208">
    <property type="protein sequence ID" value="AAL14627.1"/>
    <property type="molecule type" value="mRNA"/>
</dbReference>
<dbReference type="EMBL" id="AK012430">
    <property type="protein sequence ID" value="BAB28233.1"/>
    <property type="molecule type" value="mRNA"/>
</dbReference>
<dbReference type="EMBL" id="AK044148">
    <property type="protein sequence ID" value="BAC31799.1"/>
    <property type="molecule type" value="mRNA"/>
</dbReference>
<dbReference type="CCDS" id="CCDS17125.1"/>
<dbReference type="RefSeq" id="NP_001157158.1">
    <property type="nucleotide sequence ID" value="NM_001163686.1"/>
</dbReference>
<dbReference type="RefSeq" id="NP_084037.3">
    <property type="nucleotide sequence ID" value="NM_029761.4"/>
</dbReference>
<dbReference type="SMR" id="Q91ZM9"/>
<dbReference type="FunCoup" id="Q91ZM9">
    <property type="interactions" value="406"/>
</dbReference>
<dbReference type="STRING" id="10090.ENSMUSP00000029075"/>
<dbReference type="iPTMnet" id="Q91ZM9"/>
<dbReference type="PhosphoSitePlus" id="Q91ZM9"/>
<dbReference type="PaxDb" id="10090-ENSMUSP00000029075"/>
<dbReference type="ProteomicsDB" id="277589"/>
<dbReference type="Antibodypedia" id="28805">
    <property type="antibodies" value="377 antibodies from 33 providers"/>
</dbReference>
<dbReference type="DNASU" id="76829"/>
<dbReference type="Ensembl" id="ENSMUST00000029075.5">
    <property type="protein sequence ID" value="ENSMUSP00000029075.5"/>
    <property type="gene ID" value="ENSMUSG00000027560.5"/>
</dbReference>
<dbReference type="GeneID" id="76829"/>
<dbReference type="KEGG" id="mmu:76829"/>
<dbReference type="UCSC" id="uc008ocg.2">
    <property type="organism name" value="mouse"/>
</dbReference>
<dbReference type="AGR" id="MGI:1924079"/>
<dbReference type="CTD" id="55816"/>
<dbReference type="MGI" id="MGI:1924079">
    <property type="gene designation" value="Dok5"/>
</dbReference>
<dbReference type="VEuPathDB" id="HostDB:ENSMUSG00000027560"/>
<dbReference type="eggNOG" id="KOG4047">
    <property type="taxonomic scope" value="Eukaryota"/>
</dbReference>
<dbReference type="GeneTree" id="ENSGT00940000160725"/>
<dbReference type="HOGENOM" id="CLU_057256_1_0_1"/>
<dbReference type="InParanoid" id="Q91ZM9"/>
<dbReference type="OMA" id="VKLMVQE"/>
<dbReference type="OrthoDB" id="6279276at2759"/>
<dbReference type="PhylomeDB" id="Q91ZM9"/>
<dbReference type="TreeFam" id="TF324994"/>
<dbReference type="Reactome" id="R-MMU-8853659">
    <property type="pathway name" value="RET signaling"/>
</dbReference>
<dbReference type="BioGRID-ORCS" id="76829">
    <property type="hits" value="2 hits in 77 CRISPR screens"/>
</dbReference>
<dbReference type="ChiTaRS" id="Dok5">
    <property type="organism name" value="mouse"/>
</dbReference>
<dbReference type="PRO" id="PR:Q91ZM9"/>
<dbReference type="Proteomes" id="UP000000589">
    <property type="component" value="Chromosome 2"/>
</dbReference>
<dbReference type="RNAct" id="Q91ZM9">
    <property type="molecule type" value="protein"/>
</dbReference>
<dbReference type="Bgee" id="ENSMUSG00000027560">
    <property type="expression patterns" value="Expressed in embryonic brain and 75 other cell types or tissues"/>
</dbReference>
<dbReference type="GO" id="GO:0007169">
    <property type="term" value="P:cell surface receptor protein tyrosine kinase signaling pathway"/>
    <property type="evidence" value="ECO:0000353"/>
    <property type="project" value="MGI"/>
</dbReference>
<dbReference type="GO" id="GO:0030182">
    <property type="term" value="P:neuron differentiation"/>
    <property type="evidence" value="ECO:0000314"/>
    <property type="project" value="MGI"/>
</dbReference>
<dbReference type="GO" id="GO:0043410">
    <property type="term" value="P:positive regulation of MAPK cascade"/>
    <property type="evidence" value="ECO:0000314"/>
    <property type="project" value="MGI"/>
</dbReference>
<dbReference type="GO" id="GO:0051386">
    <property type="term" value="P:regulation of neurotrophin TRK receptor signaling pathway"/>
    <property type="evidence" value="ECO:0000266"/>
    <property type="project" value="MGI"/>
</dbReference>
<dbReference type="CDD" id="cd14678">
    <property type="entry name" value="PH_DOK4_DOK5_DOK6"/>
    <property type="match status" value="1"/>
</dbReference>
<dbReference type="CDD" id="cd13164">
    <property type="entry name" value="PTB_DOK4_DOK5_DOK6"/>
    <property type="match status" value="1"/>
</dbReference>
<dbReference type="FunFam" id="2.30.29.30:FF:000110">
    <property type="entry name" value="Docking protein 4"/>
    <property type="match status" value="1"/>
</dbReference>
<dbReference type="FunFam" id="2.30.29.30:FF:000082">
    <property type="entry name" value="Docking protein 5"/>
    <property type="match status" value="1"/>
</dbReference>
<dbReference type="Gene3D" id="2.30.29.30">
    <property type="entry name" value="Pleckstrin-homology domain (PH domain)/Phosphotyrosine-binding domain (PTB)"/>
    <property type="match status" value="2"/>
</dbReference>
<dbReference type="InterPro" id="IPR050996">
    <property type="entry name" value="Docking_Protein_DOK"/>
</dbReference>
<dbReference type="InterPro" id="IPR037816">
    <property type="entry name" value="DOK4/5/6_PH"/>
</dbReference>
<dbReference type="InterPro" id="IPR002404">
    <property type="entry name" value="IRS_PTB"/>
</dbReference>
<dbReference type="InterPro" id="IPR011993">
    <property type="entry name" value="PH-like_dom_sf"/>
</dbReference>
<dbReference type="InterPro" id="IPR001849">
    <property type="entry name" value="PH_domain"/>
</dbReference>
<dbReference type="PANTHER" id="PTHR21258:SF45">
    <property type="entry name" value="DOCKING PROTEIN 5"/>
    <property type="match status" value="1"/>
</dbReference>
<dbReference type="PANTHER" id="PTHR21258">
    <property type="entry name" value="DOCKING PROTEIN RELATED"/>
    <property type="match status" value="1"/>
</dbReference>
<dbReference type="Pfam" id="PF02174">
    <property type="entry name" value="IRS"/>
    <property type="match status" value="1"/>
</dbReference>
<dbReference type="SMART" id="SM01244">
    <property type="entry name" value="IRS"/>
    <property type="match status" value="1"/>
</dbReference>
<dbReference type="SMART" id="SM00233">
    <property type="entry name" value="PH"/>
    <property type="match status" value="1"/>
</dbReference>
<dbReference type="SMART" id="SM00310">
    <property type="entry name" value="PTBI"/>
    <property type="match status" value="1"/>
</dbReference>
<dbReference type="SUPFAM" id="SSF50729">
    <property type="entry name" value="PH domain-like"/>
    <property type="match status" value="2"/>
</dbReference>
<dbReference type="PROSITE" id="PS51064">
    <property type="entry name" value="IRS_PTB"/>
    <property type="match status" value="1"/>
</dbReference>
<evidence type="ECO:0000250" key="1"/>
<evidence type="ECO:0000255" key="2">
    <source>
        <dbReference type="PROSITE-ProRule" id="PRU00389"/>
    </source>
</evidence>
<evidence type="ECO:0000269" key="3">
    <source>
    </source>
</evidence>
<evidence type="ECO:0000305" key="4"/>
<sequence>MASNFNDIVKQGYVRIRSRRLGIYQRCWLVFKKASSKGPKRLEKFSDERAAYFRCYHKVTELNNVKNVARLPKSTKKHAIGIYFNDDTSKTFACESDLEADEWCKVLQMECVGTRINDISLGEPDLLATGVEREQSERFNVYLMPSPNLDVHGECALQITYEYICLWDVQNPRVKLISWPLSALRRYGRDTTWFTFEAGRMCETGEGLFIFQTRDGEAIYQKVHSAALAIAEQHERLLQSVKNSMLQMKKSERAASLSTVVPLPRSAYWQHITRQHSTGQLYHLQDVTSPLKLHRTETFPTYRSEH</sequence>
<organism>
    <name type="scientific">Mus musculus</name>
    <name type="common">Mouse</name>
    <dbReference type="NCBI Taxonomy" id="10090"/>
    <lineage>
        <taxon>Eukaryota</taxon>
        <taxon>Metazoa</taxon>
        <taxon>Chordata</taxon>
        <taxon>Craniata</taxon>
        <taxon>Vertebrata</taxon>
        <taxon>Euteleostomi</taxon>
        <taxon>Mammalia</taxon>
        <taxon>Eutheria</taxon>
        <taxon>Euarchontoglires</taxon>
        <taxon>Glires</taxon>
        <taxon>Rodentia</taxon>
        <taxon>Myomorpha</taxon>
        <taxon>Muroidea</taxon>
        <taxon>Muridae</taxon>
        <taxon>Murinae</taxon>
        <taxon>Mus</taxon>
        <taxon>Mus</taxon>
    </lineage>
</organism>
<feature type="chain" id="PRO_0000187278" description="Docking protein 5">
    <location>
        <begin position="1"/>
        <end position="306"/>
    </location>
</feature>
<feature type="domain" description="PH">
    <location>
        <begin position="8"/>
        <end position="112"/>
    </location>
</feature>
<feature type="domain" description="IRS-type PTB" evidence="2">
    <location>
        <begin position="132"/>
        <end position="237"/>
    </location>
</feature>
<feature type="short sequence motif" description="DKFBH motif">
    <location>
        <begin position="263"/>
        <end position="273"/>
    </location>
</feature>
<feature type="sequence conflict" description="In Ref. 2; BAC31799." evidence="4" ref="2">
    <original>V</original>
    <variation>M</variation>
    <location>
        <position position="9"/>
    </location>
</feature>
<comment type="function">
    <text evidence="3">DOK proteins are enzymatically inert adaptor or scaffolding proteins. They provide a docking platform for the assembly of multimolecular signaling complexes. DOK5 functions in RET-mediated neurite outgrowth and plays a positive role in activation of the MAP kinase pathway. Putative link with downstream effectors of RET in neuronal differentiation.</text>
</comment>
<comment type="subunit">
    <text evidence="3">Interacts with phosphorylated RET. In contrast to other DOK proteins, it does not interact with RASGAP.</text>
</comment>
<comment type="tissue specificity">
    <text evidence="3">Specifically expressed in the brain, with a high specificity for neurons.</text>
</comment>
<comment type="developmental stage">
    <text>In 12.5 dpc and 13 dpc embryos, it is expressed in the central nervous system, e.g. in the neural tube, the dorsal root and the cranial ganglion.</text>
</comment>
<comment type="domain">
    <text>PTB domain mediates receptor interaction.</text>
</comment>
<comment type="PTM">
    <text evidence="1">Phosphorylated on tyrosine residues in response to insulin, IGF1 and GDNF.</text>
</comment>
<comment type="similarity">
    <text evidence="4">Belongs to the DOK family. Type B subfamily.</text>
</comment>
<proteinExistence type="evidence at protein level"/>
<gene>
    <name type="primary">Dok5</name>
</gene>
<reference key="1">
    <citation type="journal article" date="2001" name="J. Cell Biol.">
        <title>Novel p62dok family members, dok-4 and dok-5, are substrates of the c-Ret receptor tyrosine kinase and mediate neuronal differentiation.</title>
        <authorList>
            <person name="Grimm J."/>
            <person name="Sachs M."/>
            <person name="Britsch S."/>
            <person name="Di Cesare S."/>
            <person name="Schwarz-Romond T."/>
            <person name="Alitalo K."/>
            <person name="Birchmeier W."/>
        </authorList>
    </citation>
    <scope>NUCLEOTIDE SEQUENCE [MRNA]</scope>
    <scope>TISSUE SPECIFICITY</scope>
    <scope>FUNCTION</scope>
    <scope>INTERACTION WITH RET</scope>
    <source>
        <tissue>Embryo</tissue>
    </source>
</reference>
<reference key="2">
    <citation type="journal article" date="2005" name="Science">
        <title>The transcriptional landscape of the mammalian genome.</title>
        <authorList>
            <person name="Carninci P."/>
            <person name="Kasukawa T."/>
            <person name="Katayama S."/>
            <person name="Gough J."/>
            <person name="Frith M.C."/>
            <person name="Maeda N."/>
            <person name="Oyama R."/>
            <person name="Ravasi T."/>
            <person name="Lenhard B."/>
            <person name="Wells C."/>
            <person name="Kodzius R."/>
            <person name="Shimokawa K."/>
            <person name="Bajic V.B."/>
            <person name="Brenner S.E."/>
            <person name="Batalov S."/>
            <person name="Forrest A.R."/>
            <person name="Zavolan M."/>
            <person name="Davis M.J."/>
            <person name="Wilming L.G."/>
            <person name="Aidinis V."/>
            <person name="Allen J.E."/>
            <person name="Ambesi-Impiombato A."/>
            <person name="Apweiler R."/>
            <person name="Aturaliya R.N."/>
            <person name="Bailey T.L."/>
            <person name="Bansal M."/>
            <person name="Baxter L."/>
            <person name="Beisel K.W."/>
            <person name="Bersano T."/>
            <person name="Bono H."/>
            <person name="Chalk A.M."/>
            <person name="Chiu K.P."/>
            <person name="Choudhary V."/>
            <person name="Christoffels A."/>
            <person name="Clutterbuck D.R."/>
            <person name="Crowe M.L."/>
            <person name="Dalla E."/>
            <person name="Dalrymple B.P."/>
            <person name="de Bono B."/>
            <person name="Della Gatta G."/>
            <person name="di Bernardo D."/>
            <person name="Down T."/>
            <person name="Engstrom P."/>
            <person name="Fagiolini M."/>
            <person name="Faulkner G."/>
            <person name="Fletcher C.F."/>
            <person name="Fukushima T."/>
            <person name="Furuno M."/>
            <person name="Futaki S."/>
            <person name="Gariboldi M."/>
            <person name="Georgii-Hemming P."/>
            <person name="Gingeras T.R."/>
            <person name="Gojobori T."/>
            <person name="Green R.E."/>
            <person name="Gustincich S."/>
            <person name="Harbers M."/>
            <person name="Hayashi Y."/>
            <person name="Hensch T.K."/>
            <person name="Hirokawa N."/>
            <person name="Hill D."/>
            <person name="Huminiecki L."/>
            <person name="Iacono M."/>
            <person name="Ikeo K."/>
            <person name="Iwama A."/>
            <person name="Ishikawa T."/>
            <person name="Jakt M."/>
            <person name="Kanapin A."/>
            <person name="Katoh M."/>
            <person name="Kawasawa Y."/>
            <person name="Kelso J."/>
            <person name="Kitamura H."/>
            <person name="Kitano H."/>
            <person name="Kollias G."/>
            <person name="Krishnan S.P."/>
            <person name="Kruger A."/>
            <person name="Kummerfeld S.K."/>
            <person name="Kurochkin I.V."/>
            <person name="Lareau L.F."/>
            <person name="Lazarevic D."/>
            <person name="Lipovich L."/>
            <person name="Liu J."/>
            <person name="Liuni S."/>
            <person name="McWilliam S."/>
            <person name="Madan Babu M."/>
            <person name="Madera M."/>
            <person name="Marchionni L."/>
            <person name="Matsuda H."/>
            <person name="Matsuzawa S."/>
            <person name="Miki H."/>
            <person name="Mignone F."/>
            <person name="Miyake S."/>
            <person name="Morris K."/>
            <person name="Mottagui-Tabar S."/>
            <person name="Mulder N."/>
            <person name="Nakano N."/>
            <person name="Nakauchi H."/>
            <person name="Ng P."/>
            <person name="Nilsson R."/>
            <person name="Nishiguchi S."/>
            <person name="Nishikawa S."/>
            <person name="Nori F."/>
            <person name="Ohara O."/>
            <person name="Okazaki Y."/>
            <person name="Orlando V."/>
            <person name="Pang K.C."/>
            <person name="Pavan W.J."/>
            <person name="Pavesi G."/>
            <person name="Pesole G."/>
            <person name="Petrovsky N."/>
            <person name="Piazza S."/>
            <person name="Reed J."/>
            <person name="Reid J.F."/>
            <person name="Ring B.Z."/>
            <person name="Ringwald M."/>
            <person name="Rost B."/>
            <person name="Ruan Y."/>
            <person name="Salzberg S.L."/>
            <person name="Sandelin A."/>
            <person name="Schneider C."/>
            <person name="Schoenbach C."/>
            <person name="Sekiguchi K."/>
            <person name="Semple C.A."/>
            <person name="Seno S."/>
            <person name="Sessa L."/>
            <person name="Sheng Y."/>
            <person name="Shibata Y."/>
            <person name="Shimada H."/>
            <person name="Shimada K."/>
            <person name="Silva D."/>
            <person name="Sinclair B."/>
            <person name="Sperling S."/>
            <person name="Stupka E."/>
            <person name="Sugiura K."/>
            <person name="Sultana R."/>
            <person name="Takenaka Y."/>
            <person name="Taki K."/>
            <person name="Tammoja K."/>
            <person name="Tan S.L."/>
            <person name="Tang S."/>
            <person name="Taylor M.S."/>
            <person name="Tegner J."/>
            <person name="Teichmann S.A."/>
            <person name="Ueda H.R."/>
            <person name="van Nimwegen E."/>
            <person name="Verardo R."/>
            <person name="Wei C.L."/>
            <person name="Yagi K."/>
            <person name="Yamanishi H."/>
            <person name="Zabarovsky E."/>
            <person name="Zhu S."/>
            <person name="Zimmer A."/>
            <person name="Hide W."/>
            <person name="Bult C."/>
            <person name="Grimmond S.M."/>
            <person name="Teasdale R.D."/>
            <person name="Liu E.T."/>
            <person name="Brusic V."/>
            <person name="Quackenbush J."/>
            <person name="Wahlestedt C."/>
            <person name="Mattick J.S."/>
            <person name="Hume D.A."/>
            <person name="Kai C."/>
            <person name="Sasaki D."/>
            <person name="Tomaru Y."/>
            <person name="Fukuda S."/>
            <person name="Kanamori-Katayama M."/>
            <person name="Suzuki M."/>
            <person name="Aoki J."/>
            <person name="Arakawa T."/>
            <person name="Iida J."/>
            <person name="Imamura K."/>
            <person name="Itoh M."/>
            <person name="Kato T."/>
            <person name="Kawaji H."/>
            <person name="Kawagashira N."/>
            <person name="Kawashima T."/>
            <person name="Kojima M."/>
            <person name="Kondo S."/>
            <person name="Konno H."/>
            <person name="Nakano K."/>
            <person name="Ninomiya N."/>
            <person name="Nishio T."/>
            <person name="Okada M."/>
            <person name="Plessy C."/>
            <person name="Shibata K."/>
            <person name="Shiraki T."/>
            <person name="Suzuki S."/>
            <person name="Tagami M."/>
            <person name="Waki K."/>
            <person name="Watahiki A."/>
            <person name="Okamura-Oho Y."/>
            <person name="Suzuki H."/>
            <person name="Kawai J."/>
            <person name="Hayashizaki Y."/>
        </authorList>
    </citation>
    <scope>NUCLEOTIDE SEQUENCE [LARGE SCALE MRNA]</scope>
    <source>
        <tissue>Brain cortex</tissue>
        <tissue>Embryo</tissue>
    </source>
</reference>
<accession>Q91ZM9</accession>
<accession>Q8BRI3</accession>
<accession>Q9CSM6</accession>